<comment type="function">
    <text evidence="1">This b-type cytochrome is tightly associated with the reaction center of photosystem II (PSII). PSII is a light-driven water:plastoquinone oxidoreductase that uses light energy to abstract electrons from H(2)O, generating O(2) and a proton gradient subsequently used for ATP formation. It consists of a core antenna complex that captures photons, and an electron transfer chain that converts photonic excitation into a charge separation.</text>
</comment>
<comment type="cofactor">
    <cofactor evidence="1">
        <name>heme b</name>
        <dbReference type="ChEBI" id="CHEBI:60344"/>
    </cofactor>
    <text evidence="1">With its partner (PsbE) binds heme. PSII binds additional chlorophylls, carotenoids and specific lipids.</text>
</comment>
<comment type="subunit">
    <text evidence="1">Heterodimer of an alpha subunit and a beta subunit. PSII is composed of 1 copy each of membrane proteins PsbA, PsbB, PsbC, PsbD, PsbE, PsbF, PsbH, PsbI, PsbJ, PsbK, PsbL, PsbM, PsbT, PsbX, PsbY, PsbZ, Psb30/Ycf12, at least 3 peripheral proteins of the oxygen-evolving complex and a large number of cofactors. It forms dimeric complexes.</text>
</comment>
<comment type="subcellular location">
    <subcellularLocation>
        <location evidence="1">Plastid</location>
        <location evidence="1">Chloroplast thylakoid membrane</location>
        <topology evidence="1">Single-pass membrane protein</topology>
    </subcellularLocation>
</comment>
<comment type="similarity">
    <text evidence="1">Belongs to the PsbE/PsbF family.</text>
</comment>
<geneLocation type="chloroplast"/>
<gene>
    <name evidence="1" type="primary">psbF</name>
</gene>
<protein>
    <recommendedName>
        <fullName evidence="1">Cytochrome b559 subunit beta</fullName>
    </recommendedName>
    <alternativeName>
        <fullName evidence="1">PSII reaction center subunit VI</fullName>
    </alternativeName>
</protein>
<name>PSBF_ILLPA</name>
<reference key="1">
    <citation type="journal article" date="2000" name="Am. J. Bot.">
        <title>Utility of 17 chloroplast genes for inferring the phylogeny of the basal angiosperms.</title>
        <authorList>
            <person name="Graham S.W."/>
            <person name="Olmstead R.G."/>
        </authorList>
    </citation>
    <scope>NUCLEOTIDE SEQUENCE [GENOMIC DNA]</scope>
</reference>
<evidence type="ECO:0000255" key="1">
    <source>
        <dbReference type="HAMAP-Rule" id="MF_00643"/>
    </source>
</evidence>
<feature type="chain" id="PRO_0000200402" description="Cytochrome b559 subunit beta">
    <location>
        <begin position="1"/>
        <end position="39"/>
    </location>
</feature>
<feature type="transmembrane region" description="Helical" evidence="1">
    <location>
        <begin position="14"/>
        <end position="30"/>
    </location>
</feature>
<feature type="binding site" description="axial binding residue" evidence="1">
    <location>
        <position position="18"/>
    </location>
    <ligand>
        <name>heme</name>
        <dbReference type="ChEBI" id="CHEBI:30413"/>
        <note>ligand shared with alpha subunit</note>
    </ligand>
    <ligandPart>
        <name>Fe</name>
        <dbReference type="ChEBI" id="CHEBI:18248"/>
    </ligandPart>
</feature>
<organism>
    <name type="scientific">Illicium parviflorum</name>
    <name type="common">Yellow anise tree</name>
    <name type="synonym">Badianifera parviflora</name>
    <dbReference type="NCBI Taxonomy" id="13099"/>
    <lineage>
        <taxon>Eukaryota</taxon>
        <taxon>Viridiplantae</taxon>
        <taxon>Streptophyta</taxon>
        <taxon>Embryophyta</taxon>
        <taxon>Tracheophyta</taxon>
        <taxon>Spermatophyta</taxon>
        <taxon>Magnoliopsida</taxon>
        <taxon>Austrobaileyales</taxon>
        <taxon>Schisandraceae</taxon>
        <taxon>Illicium</taxon>
    </lineage>
</organism>
<accession>Q7J1A9</accession>
<sequence length="39" mass="4484">MTIDRTYPIFTVRWLAVHGLAVPTVFFLGSISAMQFIQR</sequence>
<keyword id="KW-0150">Chloroplast</keyword>
<keyword id="KW-0249">Electron transport</keyword>
<keyword id="KW-0349">Heme</keyword>
<keyword id="KW-0408">Iron</keyword>
<keyword id="KW-0472">Membrane</keyword>
<keyword id="KW-0479">Metal-binding</keyword>
<keyword id="KW-0602">Photosynthesis</keyword>
<keyword id="KW-0604">Photosystem II</keyword>
<keyword id="KW-0934">Plastid</keyword>
<keyword id="KW-0793">Thylakoid</keyword>
<keyword id="KW-0812">Transmembrane</keyword>
<keyword id="KW-1133">Transmembrane helix</keyword>
<keyword id="KW-0813">Transport</keyword>
<proteinExistence type="inferred from homology"/>
<dbReference type="EMBL" id="AF123838">
    <property type="protein sequence ID" value="AAG26231.1"/>
    <property type="molecule type" value="Genomic_DNA"/>
</dbReference>
<dbReference type="SMR" id="Q7J1A9"/>
<dbReference type="GO" id="GO:0009535">
    <property type="term" value="C:chloroplast thylakoid membrane"/>
    <property type="evidence" value="ECO:0007669"/>
    <property type="project" value="UniProtKB-SubCell"/>
</dbReference>
<dbReference type="GO" id="GO:0009539">
    <property type="term" value="C:photosystem II reaction center"/>
    <property type="evidence" value="ECO:0007669"/>
    <property type="project" value="InterPro"/>
</dbReference>
<dbReference type="GO" id="GO:0009055">
    <property type="term" value="F:electron transfer activity"/>
    <property type="evidence" value="ECO:0007669"/>
    <property type="project" value="UniProtKB-UniRule"/>
</dbReference>
<dbReference type="GO" id="GO:0020037">
    <property type="term" value="F:heme binding"/>
    <property type="evidence" value="ECO:0007669"/>
    <property type="project" value="InterPro"/>
</dbReference>
<dbReference type="GO" id="GO:0005506">
    <property type="term" value="F:iron ion binding"/>
    <property type="evidence" value="ECO:0007669"/>
    <property type="project" value="UniProtKB-UniRule"/>
</dbReference>
<dbReference type="GO" id="GO:0009767">
    <property type="term" value="P:photosynthetic electron transport chain"/>
    <property type="evidence" value="ECO:0007669"/>
    <property type="project" value="InterPro"/>
</dbReference>
<dbReference type="HAMAP" id="MF_00643">
    <property type="entry name" value="PSII_PsbF"/>
    <property type="match status" value="1"/>
</dbReference>
<dbReference type="InterPro" id="IPR006241">
    <property type="entry name" value="PSII_cyt_b559_bsu"/>
</dbReference>
<dbReference type="InterPro" id="IPR006216">
    <property type="entry name" value="PSII_cyt_b559_CS"/>
</dbReference>
<dbReference type="InterPro" id="IPR013081">
    <property type="entry name" value="PSII_cyt_b559_N"/>
</dbReference>
<dbReference type="NCBIfam" id="TIGR01333">
    <property type="entry name" value="cyt_b559_beta"/>
    <property type="match status" value="1"/>
</dbReference>
<dbReference type="Pfam" id="PF00283">
    <property type="entry name" value="Cytochrom_B559"/>
    <property type="match status" value="1"/>
</dbReference>
<dbReference type="PIRSF" id="PIRSF000037">
    <property type="entry name" value="PsbF"/>
    <property type="match status" value="1"/>
</dbReference>
<dbReference type="SUPFAM" id="SSF161045">
    <property type="entry name" value="Cytochrome b559 subunits"/>
    <property type="match status" value="1"/>
</dbReference>
<dbReference type="PROSITE" id="PS00537">
    <property type="entry name" value="CYTOCHROME_B559"/>
    <property type="match status" value="1"/>
</dbReference>